<reference key="1">
    <citation type="journal article" date="2007" name="Nat. Genet.">
        <title>Genomic analysis of Bartonella identifies type IV secretion systems as host adaptability factors.</title>
        <authorList>
            <person name="Saenz H.L."/>
            <person name="Engel P."/>
            <person name="Stoeckli M.C."/>
            <person name="Lanz C."/>
            <person name="Raddatz G."/>
            <person name="Vayssier-Taussat M."/>
            <person name="Birtles R."/>
            <person name="Schuster S.C."/>
            <person name="Dehio C."/>
        </authorList>
    </citation>
    <scope>NUCLEOTIDE SEQUENCE [LARGE SCALE GENOMIC DNA]</scope>
    <source>
        <strain>CIP 105476 / IBS 506</strain>
    </source>
</reference>
<organism>
    <name type="scientific">Bartonella tribocorum (strain CIP 105476 / IBS 506)</name>
    <dbReference type="NCBI Taxonomy" id="382640"/>
    <lineage>
        <taxon>Bacteria</taxon>
        <taxon>Pseudomonadati</taxon>
        <taxon>Pseudomonadota</taxon>
        <taxon>Alphaproteobacteria</taxon>
        <taxon>Hyphomicrobiales</taxon>
        <taxon>Bartonellaceae</taxon>
        <taxon>Bartonella</taxon>
    </lineage>
</organism>
<comment type="function">
    <text evidence="1">Catalyzes the ATP-dependent 2-thiolation of cytidine in position 32 of tRNA, to form 2-thiocytidine (s(2)C32). The sulfur atoms are provided by the cysteine/cysteine desulfurase (IscS) system.</text>
</comment>
<comment type="catalytic activity">
    <reaction evidence="1">
        <text>cytidine(32) in tRNA + S-sulfanyl-L-cysteinyl-[cysteine desulfurase] + AH2 + ATP = 2-thiocytidine(32) in tRNA + L-cysteinyl-[cysteine desulfurase] + A + AMP + diphosphate + H(+)</text>
        <dbReference type="Rhea" id="RHEA:57048"/>
        <dbReference type="Rhea" id="RHEA-COMP:10288"/>
        <dbReference type="Rhea" id="RHEA-COMP:12157"/>
        <dbReference type="Rhea" id="RHEA-COMP:12158"/>
        <dbReference type="Rhea" id="RHEA-COMP:14821"/>
        <dbReference type="ChEBI" id="CHEBI:13193"/>
        <dbReference type="ChEBI" id="CHEBI:15378"/>
        <dbReference type="ChEBI" id="CHEBI:17499"/>
        <dbReference type="ChEBI" id="CHEBI:29950"/>
        <dbReference type="ChEBI" id="CHEBI:30616"/>
        <dbReference type="ChEBI" id="CHEBI:33019"/>
        <dbReference type="ChEBI" id="CHEBI:61963"/>
        <dbReference type="ChEBI" id="CHEBI:82748"/>
        <dbReference type="ChEBI" id="CHEBI:141453"/>
        <dbReference type="ChEBI" id="CHEBI:456215"/>
    </reaction>
    <physiologicalReaction direction="left-to-right" evidence="1">
        <dbReference type="Rhea" id="RHEA:57049"/>
    </physiologicalReaction>
</comment>
<comment type="cofactor">
    <cofactor evidence="1">
        <name>Mg(2+)</name>
        <dbReference type="ChEBI" id="CHEBI:18420"/>
    </cofactor>
</comment>
<comment type="cofactor">
    <cofactor evidence="1">
        <name>[4Fe-4S] cluster</name>
        <dbReference type="ChEBI" id="CHEBI:49883"/>
    </cofactor>
    <text evidence="1">Binds 1 [4Fe-4S] cluster per subunit. The cluster is chelated by three Cys residues, the fourth Fe has a free coordination site that may bind a sulfur atom transferred from the persulfide of IscS.</text>
</comment>
<comment type="pathway">
    <text evidence="1">tRNA modification.</text>
</comment>
<comment type="subunit">
    <text evidence="1">Homodimer.</text>
</comment>
<comment type="subcellular location">
    <subcellularLocation>
        <location evidence="1">Cytoplasm</location>
    </subcellularLocation>
</comment>
<comment type="miscellaneous">
    <text evidence="1">The thiolation reaction likely consists of two steps: a first activation step by ATP to form an adenylated intermediate of the target base of tRNA, and a second nucleophilic substitution step of the sulfur (S) atom supplied by the hydrosulfide attached to the Fe-S cluster.</text>
</comment>
<comment type="similarity">
    <text evidence="1">Belongs to the TtcA family.</text>
</comment>
<keyword id="KW-0004">4Fe-4S</keyword>
<keyword id="KW-0067">ATP-binding</keyword>
<keyword id="KW-0963">Cytoplasm</keyword>
<keyword id="KW-0408">Iron</keyword>
<keyword id="KW-0411">Iron-sulfur</keyword>
<keyword id="KW-0460">Magnesium</keyword>
<keyword id="KW-0479">Metal-binding</keyword>
<keyword id="KW-0547">Nucleotide-binding</keyword>
<keyword id="KW-0694">RNA-binding</keyword>
<keyword id="KW-0808">Transferase</keyword>
<keyword id="KW-0819">tRNA processing</keyword>
<keyword id="KW-0820">tRNA-binding</keyword>
<feature type="chain" id="PRO_0000348665" description="tRNA-cytidine(32) 2-sulfurtransferase">
    <location>
        <begin position="1"/>
        <end position="288"/>
    </location>
</feature>
<feature type="short sequence motif" description="PP-loop motif" evidence="1">
    <location>
        <begin position="70"/>
        <end position="75"/>
    </location>
</feature>
<feature type="binding site" evidence="1">
    <location>
        <position position="145"/>
    </location>
    <ligand>
        <name>[4Fe-4S] cluster</name>
        <dbReference type="ChEBI" id="CHEBI:49883"/>
    </ligand>
</feature>
<feature type="binding site" evidence="1">
    <location>
        <position position="148"/>
    </location>
    <ligand>
        <name>[4Fe-4S] cluster</name>
        <dbReference type="ChEBI" id="CHEBI:49883"/>
    </ligand>
</feature>
<feature type="binding site" evidence="1">
    <location>
        <position position="236"/>
    </location>
    <ligand>
        <name>[4Fe-4S] cluster</name>
        <dbReference type="ChEBI" id="CHEBI:49883"/>
    </ligand>
</feature>
<sequence length="288" mass="33043">MNDVSVEYQAIEEKDVLLASKADDCHPIFRRAPSSVEFNKLRKRLLRHMRQALDDFSMLSTGKKWLVALSGGKDSYGLLALLLDLKWRGLLPVEILACNLDQGQPGFPKHILPDFLSSYKIPYRIEYQDTYSIVTDKLAQTQTYCSLCSRLRRGNLYRIAREEGCSALILGHHRDDVLETFFMNLFHGGRLAAMPGKLKNDEGDLFVLRPLVYAAEEDMEKFSQAMQFPIIPCNLCGSQDGLQRNAMKEMLKNIERQMPGRKDTMIRALANVRPSHLLDKKFFDFKTY</sequence>
<proteinExistence type="inferred from homology"/>
<accession>A9IUA2</accession>
<evidence type="ECO:0000255" key="1">
    <source>
        <dbReference type="HAMAP-Rule" id="MF_01850"/>
    </source>
</evidence>
<protein>
    <recommendedName>
        <fullName evidence="1">tRNA-cytidine(32) 2-sulfurtransferase</fullName>
        <ecNumber evidence="1">2.8.1.-</ecNumber>
    </recommendedName>
    <alternativeName>
        <fullName evidence="1">Two-thiocytidine biosynthesis protein A</fullName>
    </alternativeName>
    <alternativeName>
        <fullName evidence="1">tRNA 2-thiocytidine biosynthesis protein TtcA</fullName>
    </alternativeName>
</protein>
<name>TTCA_BART1</name>
<dbReference type="EC" id="2.8.1.-" evidence="1"/>
<dbReference type="EMBL" id="AM260525">
    <property type="protein sequence ID" value="CAK01531.1"/>
    <property type="molecule type" value="Genomic_DNA"/>
</dbReference>
<dbReference type="RefSeq" id="WP_012231734.1">
    <property type="nucleotide sequence ID" value="NC_010161.1"/>
</dbReference>
<dbReference type="SMR" id="A9IUA2"/>
<dbReference type="KEGG" id="btr:BT_1159"/>
<dbReference type="eggNOG" id="COG0037">
    <property type="taxonomic scope" value="Bacteria"/>
</dbReference>
<dbReference type="HOGENOM" id="CLU_026481_0_0_5"/>
<dbReference type="Proteomes" id="UP000001592">
    <property type="component" value="Chromosome"/>
</dbReference>
<dbReference type="GO" id="GO:0005737">
    <property type="term" value="C:cytoplasm"/>
    <property type="evidence" value="ECO:0007669"/>
    <property type="project" value="UniProtKB-SubCell"/>
</dbReference>
<dbReference type="GO" id="GO:0051539">
    <property type="term" value="F:4 iron, 4 sulfur cluster binding"/>
    <property type="evidence" value="ECO:0007669"/>
    <property type="project" value="UniProtKB-UniRule"/>
</dbReference>
<dbReference type="GO" id="GO:0005524">
    <property type="term" value="F:ATP binding"/>
    <property type="evidence" value="ECO:0007669"/>
    <property type="project" value="UniProtKB-UniRule"/>
</dbReference>
<dbReference type="GO" id="GO:0000287">
    <property type="term" value="F:magnesium ion binding"/>
    <property type="evidence" value="ECO:0007669"/>
    <property type="project" value="UniProtKB-UniRule"/>
</dbReference>
<dbReference type="GO" id="GO:0016783">
    <property type="term" value="F:sulfurtransferase activity"/>
    <property type="evidence" value="ECO:0007669"/>
    <property type="project" value="UniProtKB-UniRule"/>
</dbReference>
<dbReference type="GO" id="GO:0000049">
    <property type="term" value="F:tRNA binding"/>
    <property type="evidence" value="ECO:0007669"/>
    <property type="project" value="UniProtKB-KW"/>
</dbReference>
<dbReference type="GO" id="GO:0034227">
    <property type="term" value="P:tRNA thio-modification"/>
    <property type="evidence" value="ECO:0007669"/>
    <property type="project" value="UniProtKB-UniRule"/>
</dbReference>
<dbReference type="CDD" id="cd24138">
    <property type="entry name" value="TtcA-like"/>
    <property type="match status" value="1"/>
</dbReference>
<dbReference type="Gene3D" id="3.40.50.620">
    <property type="entry name" value="HUPs"/>
    <property type="match status" value="1"/>
</dbReference>
<dbReference type="HAMAP" id="MF_01850">
    <property type="entry name" value="TtcA"/>
    <property type="match status" value="1"/>
</dbReference>
<dbReference type="InterPro" id="IPR014729">
    <property type="entry name" value="Rossmann-like_a/b/a_fold"/>
</dbReference>
<dbReference type="InterPro" id="IPR011063">
    <property type="entry name" value="TilS/TtcA_N"/>
</dbReference>
<dbReference type="InterPro" id="IPR012089">
    <property type="entry name" value="tRNA_Cyd_32_2_STrfase"/>
</dbReference>
<dbReference type="InterPro" id="IPR035107">
    <property type="entry name" value="tRNA_thiolation_TtcA_Ctu1"/>
</dbReference>
<dbReference type="NCBIfam" id="NF007972">
    <property type="entry name" value="PRK10696.1"/>
    <property type="match status" value="1"/>
</dbReference>
<dbReference type="PANTHER" id="PTHR43686:SF1">
    <property type="entry name" value="AMINOTRAN_5 DOMAIN-CONTAINING PROTEIN"/>
    <property type="match status" value="1"/>
</dbReference>
<dbReference type="PANTHER" id="PTHR43686">
    <property type="entry name" value="SULFURTRANSFERASE-RELATED"/>
    <property type="match status" value="1"/>
</dbReference>
<dbReference type="Pfam" id="PF01171">
    <property type="entry name" value="ATP_bind_3"/>
    <property type="match status" value="1"/>
</dbReference>
<dbReference type="PIRSF" id="PIRSF004976">
    <property type="entry name" value="ATPase_YdaO"/>
    <property type="match status" value="1"/>
</dbReference>
<dbReference type="SUPFAM" id="SSF52402">
    <property type="entry name" value="Adenine nucleotide alpha hydrolases-like"/>
    <property type="match status" value="1"/>
</dbReference>
<gene>
    <name evidence="1" type="primary">ttcA</name>
    <name type="ordered locus">BT_1159</name>
</gene>